<sequence length="376" mass="41796">MCDDEVAALVVDNGSGMCKAGFAGDDAPRAVFPSIVGRPRHQGVMVGMGQKDSYVGDEAQSKRGILTLKYPIEHGIVTNWDDMEKIWHHTFYNELRVAPEEHPVLLTEAPLNPKANREKMTQIMFETFNTPAMYVAIQAVLSLYASGRTTGVVLDSGDGVTHTVPIYEGYALPHAILRLDLAGRDLTDYLMKILTERGYSFTTTAEREIVRDIKEKLCYVALDFEQEMATAASSSSLEKSYELPDGQVITVGNERFRCPEAMFQPSFLGMESAGIHETSYNSIMKCDIDIRKDLYANTVLSGGTTMYPGIADRMQKEITALAPSTMKIKIIAPPERKYSVWIGGSILASLSTFQQMWISKQEYDESGPSIVHRKCF</sequence>
<proteinExistence type="evidence at protein level"/>
<comment type="function">
    <text>Actins are highly conserved proteins that are involved in various types of cell motility and are ubiquitously expressed in all eukaryotic cells.</text>
</comment>
<comment type="catalytic activity">
    <reaction evidence="2">
        <text>ATP + H2O = ADP + phosphate + H(+)</text>
        <dbReference type="Rhea" id="RHEA:13065"/>
        <dbReference type="ChEBI" id="CHEBI:15377"/>
        <dbReference type="ChEBI" id="CHEBI:15378"/>
        <dbReference type="ChEBI" id="CHEBI:30616"/>
        <dbReference type="ChEBI" id="CHEBI:43474"/>
        <dbReference type="ChEBI" id="CHEBI:456216"/>
    </reaction>
</comment>
<comment type="subcellular location">
    <subcellularLocation>
        <location>Cytoplasm</location>
        <location>Cytoskeleton</location>
    </subcellularLocation>
</comment>
<comment type="miscellaneous">
    <text>In this organism there are four genes coding for actin. The sequences coded by genes 1 and 3 are identical. There are a few variations in the actins coded by genes 2 and 4.</text>
</comment>
<comment type="similarity">
    <text evidence="3">Belongs to the actin family.</text>
</comment>
<evidence type="ECO:0000250" key="1"/>
<evidence type="ECO:0000250" key="2">
    <source>
        <dbReference type="UniProtKB" id="P68137"/>
    </source>
</evidence>
<evidence type="ECO:0000305" key="3"/>
<evidence type="ECO:0007829" key="4">
    <source>
        <dbReference type="PDB" id="1D4X"/>
    </source>
</evidence>
<keyword id="KW-0002">3D-structure</keyword>
<keyword id="KW-0007">Acetylation</keyword>
<keyword id="KW-0067">ATP-binding</keyword>
<keyword id="KW-0963">Cytoplasm</keyword>
<keyword id="KW-0206">Cytoskeleton</keyword>
<keyword id="KW-0378">Hydrolase</keyword>
<keyword id="KW-0547">Nucleotide-binding</keyword>
<keyword id="KW-1185">Reference proteome</keyword>
<gene>
    <name type="primary">act-1</name>
    <name type="ORF">T04C12.6</name>
</gene>
<dbReference type="EC" id="3.6.4.-" evidence="2"/>
<dbReference type="EMBL" id="X16796">
    <property type="protein sequence ID" value="CAA34717.1"/>
    <property type="molecule type" value="Genomic_DNA"/>
</dbReference>
<dbReference type="EMBL" id="Z81584">
    <property type="protein sequence ID" value="CAB04678.1"/>
    <property type="molecule type" value="Genomic_DNA"/>
</dbReference>
<dbReference type="EMBL" id="J01042">
    <property type="protein sequence ID" value="AAA27887.1"/>
    <property type="molecule type" value="Genomic_DNA"/>
</dbReference>
<dbReference type="PIR" id="S16710">
    <property type="entry name" value="S16710"/>
</dbReference>
<dbReference type="RefSeq" id="NP_505817.1">
    <property type="nucleotide sequence ID" value="NM_073416.6"/>
</dbReference>
<dbReference type="RefSeq" id="NP_505819.1">
    <property type="nucleotide sequence ID" value="NM_073418.9"/>
</dbReference>
<dbReference type="PDB" id="1D4X">
    <property type="method" value="X-ray"/>
    <property type="resolution" value="1.75 A"/>
    <property type="chains" value="A=2-376"/>
</dbReference>
<dbReference type="PDBsum" id="1D4X"/>
<dbReference type="SMR" id="P0DM41"/>
<dbReference type="BioGRID" id="44560">
    <property type="interactions" value="3"/>
</dbReference>
<dbReference type="BioGRID" id="44562">
    <property type="interactions" value="13"/>
</dbReference>
<dbReference type="FunCoup" id="P0DM41">
    <property type="interactions" value="1910"/>
</dbReference>
<dbReference type="STRING" id="6239.T04C12.4.2"/>
<dbReference type="PaxDb" id="6239-T04C12.4.1"/>
<dbReference type="PeptideAtlas" id="P0DM41"/>
<dbReference type="EnsemblMetazoa" id="T04C12.6.1">
    <property type="protein sequence ID" value="T04C12.6.1"/>
    <property type="gene ID" value="WBGene00000063"/>
</dbReference>
<dbReference type="GeneID" id="179535"/>
<dbReference type="KEGG" id="cel:CELE_T04C12.6"/>
<dbReference type="AGR" id="WB:WBGene00000063"/>
<dbReference type="CTD" id="179535"/>
<dbReference type="WormBase" id="T04C12.6">
    <property type="protein sequence ID" value="CE13148"/>
    <property type="gene ID" value="WBGene00000063"/>
    <property type="gene designation" value="act-1"/>
</dbReference>
<dbReference type="eggNOG" id="KOG0676">
    <property type="taxonomic scope" value="Eukaryota"/>
</dbReference>
<dbReference type="GeneTree" id="ENSGT00950000182960"/>
<dbReference type="HOGENOM" id="CLU_027965_0_2_1"/>
<dbReference type="InParanoid" id="P0DM41"/>
<dbReference type="OMA" id="CAQSRCR"/>
<dbReference type="OrthoDB" id="9973372at2759"/>
<dbReference type="PhylomeDB" id="P0DM41"/>
<dbReference type="Reactome" id="R-CEL-114608">
    <property type="pathway name" value="Platelet degranulation"/>
</dbReference>
<dbReference type="Reactome" id="R-CEL-190873">
    <property type="pathway name" value="Gap junction degradation"/>
</dbReference>
<dbReference type="Reactome" id="R-CEL-196025">
    <property type="pathway name" value="Formation of annular gap junctions"/>
</dbReference>
<dbReference type="Reactome" id="R-CEL-2029482">
    <property type="pathway name" value="Regulation of actin dynamics for phagocytic cup formation"/>
</dbReference>
<dbReference type="Reactome" id="R-CEL-3928662">
    <property type="pathway name" value="EPHB-mediated forward signaling"/>
</dbReference>
<dbReference type="Reactome" id="R-CEL-3928665">
    <property type="pathway name" value="EPH-ephrin mediated repulsion of cells"/>
</dbReference>
<dbReference type="Reactome" id="R-CEL-437239">
    <property type="pathway name" value="Recycling pathway of L1"/>
</dbReference>
<dbReference type="Reactome" id="R-CEL-4420097">
    <property type="pathway name" value="VEGFA-VEGFR2 Pathway"/>
</dbReference>
<dbReference type="Reactome" id="R-CEL-446353">
    <property type="pathway name" value="Cell-extracellular matrix interactions"/>
</dbReference>
<dbReference type="Reactome" id="R-CEL-5626467">
    <property type="pathway name" value="RHO GTPases activate IQGAPs"/>
</dbReference>
<dbReference type="Reactome" id="R-CEL-5663213">
    <property type="pathway name" value="RHO GTPases Activate WASPs and WAVEs"/>
</dbReference>
<dbReference type="Reactome" id="R-CEL-5663220">
    <property type="pathway name" value="RHO GTPases Activate Formins"/>
</dbReference>
<dbReference type="Reactome" id="R-CEL-5674135">
    <property type="pathway name" value="MAP2K and MAPK activation"/>
</dbReference>
<dbReference type="Reactome" id="R-CEL-8856828">
    <property type="pathway name" value="Clathrin-mediated endocytosis"/>
</dbReference>
<dbReference type="Reactome" id="R-CEL-9035034">
    <property type="pathway name" value="RHOF GTPase cycle"/>
</dbReference>
<dbReference type="Reactome" id="R-CEL-9913351">
    <property type="pathway name" value="Formation of the dystrophin-glycoprotein complex (DGC)"/>
</dbReference>
<dbReference type="EvolutionaryTrace" id="P0DM41"/>
<dbReference type="PRO" id="PR:P0DM41"/>
<dbReference type="Proteomes" id="UP000001940">
    <property type="component" value="Chromosome V"/>
</dbReference>
<dbReference type="Bgee" id="WBGene00000063">
    <property type="expression patterns" value="Expressed in pharyngeal muscle cell (C elegans) and 8 other cell types or tissues"/>
</dbReference>
<dbReference type="GO" id="GO:0015629">
    <property type="term" value="C:actin cytoskeleton"/>
    <property type="evidence" value="ECO:0000318"/>
    <property type="project" value="GO_Central"/>
</dbReference>
<dbReference type="GO" id="GO:0005737">
    <property type="term" value="C:cytoplasm"/>
    <property type="evidence" value="ECO:0007669"/>
    <property type="project" value="UniProtKB-KW"/>
</dbReference>
<dbReference type="GO" id="GO:0005524">
    <property type="term" value="F:ATP binding"/>
    <property type="evidence" value="ECO:0007669"/>
    <property type="project" value="UniProtKB-KW"/>
</dbReference>
<dbReference type="GO" id="GO:0016787">
    <property type="term" value="F:hydrolase activity"/>
    <property type="evidence" value="ECO:0007669"/>
    <property type="project" value="UniProtKB-KW"/>
</dbReference>
<dbReference type="GO" id="GO:0005200">
    <property type="term" value="F:structural constituent of cytoskeleton"/>
    <property type="evidence" value="ECO:0000250"/>
    <property type="project" value="WormBase"/>
</dbReference>
<dbReference type="GO" id="GO:0030866">
    <property type="term" value="P:cortical actin cytoskeleton organization"/>
    <property type="evidence" value="ECO:0000316"/>
    <property type="project" value="WormBase"/>
</dbReference>
<dbReference type="GO" id="GO:0009792">
    <property type="term" value="P:embryo development ending in birth or egg hatching"/>
    <property type="evidence" value="ECO:0000316"/>
    <property type="project" value="WormBase"/>
</dbReference>
<dbReference type="GO" id="GO:0000281">
    <property type="term" value="P:mitotic cytokinesis"/>
    <property type="evidence" value="ECO:0000316"/>
    <property type="project" value="WormBase"/>
</dbReference>
<dbReference type="CDD" id="cd10224">
    <property type="entry name" value="ASKHA_NBD_actin"/>
    <property type="match status" value="1"/>
</dbReference>
<dbReference type="FunFam" id="3.30.420.40:FF:000131">
    <property type="entry name" value="Actin, alpha skeletal muscle"/>
    <property type="match status" value="1"/>
</dbReference>
<dbReference type="FunFam" id="3.30.420.40:FF:000291">
    <property type="entry name" value="Actin, alpha skeletal muscle"/>
    <property type="match status" value="1"/>
</dbReference>
<dbReference type="FunFam" id="3.90.640.10:FF:000047">
    <property type="entry name" value="Actin, alpha skeletal muscle"/>
    <property type="match status" value="1"/>
</dbReference>
<dbReference type="FunFam" id="3.30.420.40:FF:000058">
    <property type="entry name" value="Putative actin-related protein 5"/>
    <property type="match status" value="1"/>
</dbReference>
<dbReference type="Gene3D" id="3.30.420.40">
    <property type="match status" value="2"/>
</dbReference>
<dbReference type="Gene3D" id="3.90.640.10">
    <property type="entry name" value="Actin, Chain A, domain 4"/>
    <property type="match status" value="1"/>
</dbReference>
<dbReference type="InterPro" id="IPR004000">
    <property type="entry name" value="Actin"/>
</dbReference>
<dbReference type="InterPro" id="IPR020902">
    <property type="entry name" value="Actin/actin-like_CS"/>
</dbReference>
<dbReference type="InterPro" id="IPR004001">
    <property type="entry name" value="Actin_CS"/>
</dbReference>
<dbReference type="InterPro" id="IPR043129">
    <property type="entry name" value="ATPase_NBD"/>
</dbReference>
<dbReference type="PANTHER" id="PTHR11937">
    <property type="entry name" value="ACTIN"/>
    <property type="match status" value="1"/>
</dbReference>
<dbReference type="Pfam" id="PF00022">
    <property type="entry name" value="Actin"/>
    <property type="match status" value="1"/>
</dbReference>
<dbReference type="PRINTS" id="PR00190">
    <property type="entry name" value="ACTIN"/>
</dbReference>
<dbReference type="SMART" id="SM00268">
    <property type="entry name" value="ACTIN"/>
    <property type="match status" value="1"/>
</dbReference>
<dbReference type="SUPFAM" id="SSF53067">
    <property type="entry name" value="Actin-like ATPase domain"/>
    <property type="match status" value="2"/>
</dbReference>
<dbReference type="PROSITE" id="PS00406">
    <property type="entry name" value="ACTINS_1"/>
    <property type="match status" value="1"/>
</dbReference>
<dbReference type="PROSITE" id="PS00432">
    <property type="entry name" value="ACTINS_2"/>
    <property type="match status" value="1"/>
</dbReference>
<dbReference type="PROSITE" id="PS01132">
    <property type="entry name" value="ACTINS_ACT_LIKE"/>
    <property type="match status" value="1"/>
</dbReference>
<name>ACT1_CAEEL</name>
<accession>P0DM41</accession>
<accession>P10983</accession>
<accession>P10985</accession>
<protein>
    <recommendedName>
        <fullName>Actin-1</fullName>
        <ecNumber evidence="2">3.6.4.-</ecNumber>
    </recommendedName>
</protein>
<organism>
    <name type="scientific">Caenorhabditis elegans</name>
    <dbReference type="NCBI Taxonomy" id="6239"/>
    <lineage>
        <taxon>Eukaryota</taxon>
        <taxon>Metazoa</taxon>
        <taxon>Ecdysozoa</taxon>
        <taxon>Nematoda</taxon>
        <taxon>Chromadorea</taxon>
        <taxon>Rhabditida</taxon>
        <taxon>Rhabditina</taxon>
        <taxon>Rhabditomorpha</taxon>
        <taxon>Rhabditoidea</taxon>
        <taxon>Rhabditidae</taxon>
        <taxon>Peloderinae</taxon>
        <taxon>Caenorhabditis</taxon>
    </lineage>
</organism>
<feature type="propeptide" id="PRO_0000000650" description="Removed in mature form" evidence="1">
    <location>
        <begin position="1"/>
        <end position="2"/>
    </location>
</feature>
<feature type="chain" id="PRO_0000000651" description="Actin-1">
    <location>
        <begin position="3"/>
        <end position="376"/>
    </location>
</feature>
<feature type="modified residue" description="N-acetylaspartate" evidence="1">
    <location>
        <position position="3"/>
    </location>
</feature>
<feature type="strand" evidence="4">
    <location>
        <begin position="9"/>
        <end position="13"/>
    </location>
</feature>
<feature type="strand" evidence="4">
    <location>
        <begin position="15"/>
        <end position="22"/>
    </location>
</feature>
<feature type="strand" evidence="4">
    <location>
        <begin position="25"/>
        <end position="27"/>
    </location>
</feature>
<feature type="strand" evidence="4">
    <location>
        <begin position="29"/>
        <end position="33"/>
    </location>
</feature>
<feature type="strand" evidence="4">
    <location>
        <begin position="36"/>
        <end position="42"/>
    </location>
</feature>
<feature type="helix" evidence="4">
    <location>
        <begin position="57"/>
        <end position="61"/>
    </location>
</feature>
<feature type="helix" evidence="4">
    <location>
        <begin position="63"/>
        <end position="65"/>
    </location>
</feature>
<feature type="strand" evidence="4">
    <location>
        <begin position="66"/>
        <end position="69"/>
    </location>
</feature>
<feature type="helix" evidence="4">
    <location>
        <begin position="80"/>
        <end position="92"/>
    </location>
</feature>
<feature type="turn" evidence="4">
    <location>
        <begin position="93"/>
        <end position="95"/>
    </location>
</feature>
<feature type="helix" evidence="4">
    <location>
        <begin position="99"/>
        <end position="101"/>
    </location>
</feature>
<feature type="strand" evidence="4">
    <location>
        <begin position="104"/>
        <end position="108"/>
    </location>
</feature>
<feature type="helix" evidence="4">
    <location>
        <begin position="114"/>
        <end position="126"/>
    </location>
</feature>
<feature type="strand" evidence="4">
    <location>
        <begin position="131"/>
        <end position="137"/>
    </location>
</feature>
<feature type="helix" evidence="4">
    <location>
        <begin position="138"/>
        <end position="145"/>
    </location>
</feature>
<feature type="strand" evidence="4">
    <location>
        <begin position="149"/>
        <end position="159"/>
    </location>
</feature>
<feature type="strand" evidence="4">
    <location>
        <begin position="161"/>
        <end position="167"/>
    </location>
</feature>
<feature type="helix" evidence="4">
    <location>
        <begin position="173"/>
        <end position="175"/>
    </location>
</feature>
<feature type="strand" evidence="4">
    <location>
        <begin position="177"/>
        <end position="180"/>
    </location>
</feature>
<feature type="helix" evidence="4">
    <location>
        <begin position="183"/>
        <end position="195"/>
    </location>
</feature>
<feature type="turn" evidence="4">
    <location>
        <begin position="196"/>
        <end position="198"/>
    </location>
</feature>
<feature type="helix" evidence="4">
    <location>
        <begin position="204"/>
        <end position="217"/>
    </location>
</feature>
<feature type="helix" evidence="4">
    <location>
        <begin position="224"/>
        <end position="233"/>
    </location>
</feature>
<feature type="strand" evidence="4">
    <location>
        <begin position="235"/>
        <end position="237"/>
    </location>
</feature>
<feature type="strand" evidence="4">
    <location>
        <begin position="239"/>
        <end position="242"/>
    </location>
</feature>
<feature type="strand" evidence="4">
    <location>
        <begin position="244"/>
        <end position="246"/>
    </location>
</feature>
<feature type="strand" evidence="4">
    <location>
        <begin position="248"/>
        <end position="251"/>
    </location>
</feature>
<feature type="helix" evidence="4">
    <location>
        <begin position="254"/>
        <end position="263"/>
    </location>
</feature>
<feature type="helix" evidence="4">
    <location>
        <begin position="265"/>
        <end position="268"/>
    </location>
</feature>
<feature type="helix" evidence="4">
    <location>
        <begin position="275"/>
        <end position="284"/>
    </location>
</feature>
<feature type="helix" evidence="4">
    <location>
        <begin position="288"/>
        <end position="290"/>
    </location>
</feature>
<feature type="helix" evidence="4">
    <location>
        <begin position="291"/>
        <end position="295"/>
    </location>
</feature>
<feature type="strand" evidence="4">
    <location>
        <begin position="298"/>
        <end position="302"/>
    </location>
</feature>
<feature type="helix" evidence="4">
    <location>
        <begin position="303"/>
        <end position="305"/>
    </location>
</feature>
<feature type="helix" evidence="4">
    <location>
        <begin position="310"/>
        <end position="321"/>
    </location>
</feature>
<feature type="turn" evidence="4">
    <location>
        <begin position="334"/>
        <end position="337"/>
    </location>
</feature>
<feature type="helix" evidence="4">
    <location>
        <begin position="339"/>
        <end position="349"/>
    </location>
</feature>
<feature type="helix" evidence="4">
    <location>
        <begin position="351"/>
        <end position="353"/>
    </location>
</feature>
<feature type="turn" evidence="4">
    <location>
        <begin position="354"/>
        <end position="356"/>
    </location>
</feature>
<feature type="strand" evidence="4">
    <location>
        <begin position="357"/>
        <end position="359"/>
    </location>
</feature>
<feature type="helix" evidence="4">
    <location>
        <begin position="360"/>
        <end position="366"/>
    </location>
</feature>
<feature type="helix" evidence="4">
    <location>
        <begin position="368"/>
        <end position="370"/>
    </location>
</feature>
<feature type="helix" evidence="4">
    <location>
        <begin position="371"/>
        <end position="374"/>
    </location>
</feature>
<reference key="1">
    <citation type="journal article" date="1989" name="J. Mol. Biol.">
        <title>Wild-type and mutant actin genes in Caenorhabditis elegans.</title>
        <authorList>
            <person name="Krause M."/>
            <person name="Wild M."/>
            <person name="Rosenzweig B."/>
            <person name="Hirsh D."/>
        </authorList>
    </citation>
    <scope>NUCLEOTIDE SEQUENCE [GENOMIC DNA]</scope>
</reference>
<reference key="2">
    <citation type="journal article" date="1998" name="Science">
        <title>Genome sequence of the nematode C. elegans: a platform for investigating biology.</title>
        <authorList>
            <consortium name="The C. elegans sequencing consortium"/>
        </authorList>
    </citation>
    <scope>NUCLEOTIDE SEQUENCE [LARGE SCALE GENOMIC DNA]</scope>
    <source>
        <strain>Bristol N2</strain>
    </source>
</reference>
<reference key="3">
    <citation type="journal article" date="1983" name="J. Mol. Biol.">
        <title>Actin gene family of Caenorhabditis elegans.</title>
        <authorList>
            <person name="Files J.G."/>
            <person name="Carr S."/>
            <person name="Hirsh D."/>
        </authorList>
    </citation>
    <scope>NUCLEOTIDE SEQUENCE [GENOMIC DNA] OF 1-86</scope>
</reference>
<reference key="4">
    <citation type="journal article" date="2003" name="Proc. Natl. Acad. Sci. U.S.A.">
        <title>The structure of nonvertebrate actin: implications for the ATP hydrolytic mechanism.</title>
        <authorList>
            <person name="Vorobiev S."/>
            <person name="Strokopytov B."/>
            <person name="Drubin D.G."/>
            <person name="Frieden C."/>
            <person name="Ono S."/>
            <person name="Condeelis J."/>
            <person name="Rubenstein P.A."/>
            <person name="Almo S.C."/>
        </authorList>
    </citation>
    <scope>X-RAY CRYSTALLOGRAPHY (1.75 ANGSTROMS) OF 2-376 IN COMPLEX WITH GELSOLIN AND ATP</scope>
</reference>